<name>GLHA_HYPMO</name>
<feature type="signal peptide">
    <location>
        <begin position="1"/>
        <end position="23"/>
    </location>
</feature>
<feature type="chain" id="PRO_0000011664" description="Glycoprotein hormones alpha chain">
    <location>
        <begin position="24"/>
        <end position="118"/>
    </location>
</feature>
<feature type="glycosylation site" description="N-linked (GlcNAc...) asparagine" evidence="1">
    <location>
        <position position="79"/>
    </location>
</feature>
<feature type="glycosylation site" description="N-linked (GlcNAc...) asparagine" evidence="1">
    <location>
        <position position="104"/>
    </location>
</feature>
<feature type="disulfide bond" evidence="1">
    <location>
        <begin position="34"/>
        <end position="58"/>
    </location>
</feature>
<feature type="disulfide bond" evidence="1">
    <location>
        <begin position="37"/>
        <end position="87"/>
    </location>
</feature>
<feature type="disulfide bond" evidence="1">
    <location>
        <begin position="55"/>
        <end position="108"/>
    </location>
</feature>
<feature type="disulfide bond" evidence="1">
    <location>
        <begin position="59"/>
        <end position="110"/>
    </location>
</feature>
<feature type="disulfide bond" evidence="1">
    <location>
        <begin position="86"/>
        <end position="113"/>
    </location>
</feature>
<sequence length="118" mass="13435">MFWTRYAGASILLFLMLIHLGQVYPRNDITNFGCEECKLKENNIFSKPGAPVYQCMGCCFSRAYPTPLRSKKTMLVPKNITSEATCCVAKEVKRVLVNDVKLVNHTDCHCSTCYYHKS</sequence>
<keyword id="KW-0903">Direct protein sequencing</keyword>
<keyword id="KW-1015">Disulfide bond</keyword>
<keyword id="KW-0325">Glycoprotein</keyword>
<keyword id="KW-0372">Hormone</keyword>
<keyword id="KW-0964">Secreted</keyword>
<keyword id="KW-0732">Signal</keyword>
<protein>
    <recommendedName>
        <fullName>Glycoprotein hormones alpha chain</fullName>
    </recommendedName>
    <alternativeName>
        <fullName>GTH-alpha</fullName>
    </alternativeName>
    <alternativeName>
        <fullName>Gonadotropin alpha chain</fullName>
    </alternativeName>
</protein>
<evidence type="ECO:0000250" key="1">
    <source>
        <dbReference type="UniProtKB" id="P01215"/>
    </source>
</evidence>
<evidence type="ECO:0000250" key="2">
    <source>
        <dbReference type="UniProtKB" id="P37204"/>
    </source>
</evidence>
<evidence type="ECO:0000305" key="3"/>
<gene>
    <name type="primary">cga</name>
</gene>
<accession>P37037</accession>
<organism>
    <name type="scientific">Hypophthalmichthys molitrix</name>
    <name type="common">Silver carp</name>
    <name type="synonym">Leuciscus molitrix</name>
    <dbReference type="NCBI Taxonomy" id="13095"/>
    <lineage>
        <taxon>Eukaryota</taxon>
        <taxon>Metazoa</taxon>
        <taxon>Chordata</taxon>
        <taxon>Craniata</taxon>
        <taxon>Vertebrata</taxon>
        <taxon>Euteleostomi</taxon>
        <taxon>Actinopterygii</taxon>
        <taxon>Neopterygii</taxon>
        <taxon>Teleostei</taxon>
        <taxon>Ostariophysi</taxon>
        <taxon>Cypriniformes</taxon>
        <taxon>Xenocyprididae</taxon>
        <taxon>Xenocypridinae</taxon>
        <taxon>Hypophthalmichthys</taxon>
    </lineage>
</organism>
<comment type="function">
    <text evidence="2">Shared alpha chain of heterodimeric glycoprotein hormones. These hormones bind specific receptors on target cells that in turn activate downstream signaling pathways. Involved in gametogenesis and steroidogenesis.</text>
</comment>
<comment type="subunit">
    <text evidence="2">Heterodimer. Glycoprotein hormones are heterodimers composed of a common alpha chain described here and a unique beta chain which confers their biological specificity to the different hormones.</text>
</comment>
<comment type="subcellular location">
    <subcellularLocation>
        <location evidence="2">Secreted</location>
    </subcellularLocation>
</comment>
<comment type="similarity">
    <text evidence="3">Belongs to the glycoprotein hormones subunit alpha family.</text>
</comment>
<proteinExistence type="evidence at protein level"/>
<reference key="1">
    <citation type="journal article" date="1990" name="Gen. Comp. Endocrinol.">
        <title>Purification, characterization, and molecular cloning of gonadotropin subunits of silver carp (Hypophthalmichthys molitrix).</title>
        <authorList>
            <person name="Chang Y.S."/>
            <person name="Huang C.J."/>
            <person name="Huang F.-L."/>
            <person name="Liu C.S."/>
            <person name="Lo T.-B."/>
        </authorList>
    </citation>
    <scope>NUCLEOTIDE SEQUENCE</scope>
    <scope>PARTIAL PROTEIN SEQUENCE</scope>
    <source>
        <tissue>Pituitary</tissue>
    </source>
</reference>
<dbReference type="PIR" id="A60626">
    <property type="entry name" value="A60626"/>
</dbReference>
<dbReference type="SMR" id="P37037"/>
<dbReference type="GlyCosmos" id="P37037">
    <property type="glycosylation" value="2 sites, No reported glycans"/>
</dbReference>
<dbReference type="GO" id="GO:0005615">
    <property type="term" value="C:extracellular space"/>
    <property type="evidence" value="ECO:0000250"/>
    <property type="project" value="UniProtKB"/>
</dbReference>
<dbReference type="GO" id="GO:0016914">
    <property type="term" value="C:follicle-stimulating hormone complex"/>
    <property type="evidence" value="ECO:0000250"/>
    <property type="project" value="UniProtKB"/>
</dbReference>
<dbReference type="GO" id="GO:0016913">
    <property type="term" value="F:follicle-stimulating hormone activity"/>
    <property type="evidence" value="ECO:0000250"/>
    <property type="project" value="UniProtKB"/>
</dbReference>
<dbReference type="GO" id="GO:0007186">
    <property type="term" value="P:G protein-coupled receptor signaling pathway"/>
    <property type="evidence" value="ECO:0000250"/>
    <property type="project" value="UniProtKB"/>
</dbReference>
<dbReference type="GO" id="GO:0010893">
    <property type="term" value="P:positive regulation of steroid biosynthetic process"/>
    <property type="evidence" value="ECO:0000250"/>
    <property type="project" value="UniProtKB"/>
</dbReference>
<dbReference type="GO" id="GO:0010469">
    <property type="term" value="P:regulation of signaling receptor activity"/>
    <property type="evidence" value="ECO:0000250"/>
    <property type="project" value="UniProtKB"/>
</dbReference>
<dbReference type="GO" id="GO:0006590">
    <property type="term" value="P:thyroid hormone generation"/>
    <property type="evidence" value="ECO:0007669"/>
    <property type="project" value="TreeGrafter"/>
</dbReference>
<dbReference type="FunFam" id="2.10.90.10:FF:000011">
    <property type="entry name" value="Glycoprotein hormones alpha chain"/>
    <property type="match status" value="1"/>
</dbReference>
<dbReference type="Gene3D" id="2.10.90.10">
    <property type="entry name" value="Cystine-knot cytokines"/>
    <property type="match status" value="1"/>
</dbReference>
<dbReference type="InterPro" id="IPR029034">
    <property type="entry name" value="Cystine-knot_cytokine"/>
</dbReference>
<dbReference type="InterPro" id="IPR000476">
    <property type="entry name" value="Glyco_hormone"/>
</dbReference>
<dbReference type="PANTHER" id="PTHR11509">
    <property type="entry name" value="GLYCOPROTEIN HORMONE ALPHA CHAIN"/>
    <property type="match status" value="1"/>
</dbReference>
<dbReference type="PANTHER" id="PTHR11509:SF0">
    <property type="entry name" value="GLYCOPROTEIN HORMONES ALPHA CHAIN"/>
    <property type="match status" value="1"/>
</dbReference>
<dbReference type="Pfam" id="PF00236">
    <property type="entry name" value="Hormone_6"/>
    <property type="match status" value="1"/>
</dbReference>
<dbReference type="PRINTS" id="PR00274">
    <property type="entry name" value="GLYCOHORMONE"/>
</dbReference>
<dbReference type="SMART" id="SM00067">
    <property type="entry name" value="GHA"/>
    <property type="match status" value="1"/>
</dbReference>
<dbReference type="SUPFAM" id="SSF57501">
    <property type="entry name" value="Cystine-knot cytokines"/>
    <property type="match status" value="1"/>
</dbReference>
<dbReference type="PROSITE" id="PS00779">
    <property type="entry name" value="GLYCO_HORMONE_ALPHA_1"/>
    <property type="match status" value="1"/>
</dbReference>
<dbReference type="PROSITE" id="PS00780">
    <property type="entry name" value="GLYCO_HORMONE_ALPHA_2"/>
    <property type="match status" value="1"/>
</dbReference>
<dbReference type="PROSITE" id="PS50277">
    <property type="entry name" value="GLYCO_HORMONE_ALPHA_3"/>
    <property type="match status" value="1"/>
</dbReference>